<organismHost>
    <name type="scientific">Escherichia coli</name>
    <dbReference type="NCBI Taxonomy" id="562"/>
</organismHost>
<organism>
    <name type="scientific">Escherichia phage lambda</name>
    <name type="common">Bacteriophage lambda</name>
    <dbReference type="NCBI Taxonomy" id="2681611"/>
    <lineage>
        <taxon>Viruses</taxon>
        <taxon>Duplodnaviria</taxon>
        <taxon>Heunggongvirae</taxon>
        <taxon>Uroviricota</taxon>
        <taxon>Caudoviricetes</taxon>
        <taxon>Lambdavirus</taxon>
        <taxon>Lambdavirus lambda</taxon>
    </lineage>
</organism>
<name>EA22_LAMBD</name>
<evidence type="ECO:0007829" key="1">
    <source>
        <dbReference type="PDB" id="8DSX"/>
    </source>
</evidence>
<dbReference type="EMBL" id="J02459">
    <property type="protein sequence ID" value="AAA96565.1"/>
    <property type="molecule type" value="Genomic_DNA"/>
</dbReference>
<dbReference type="PIR" id="A43010">
    <property type="entry name" value="ZEBP2L"/>
</dbReference>
<dbReference type="RefSeq" id="NP_040612.1">
    <property type="nucleotide sequence ID" value="NC_001416.1"/>
</dbReference>
<dbReference type="PDB" id="8DSX">
    <property type="method" value="NMR"/>
    <property type="chains" value="A/B=102-182"/>
</dbReference>
<dbReference type="PDBsum" id="8DSX"/>
<dbReference type="SMR" id="P03756"/>
<dbReference type="GeneID" id="2703469"/>
<dbReference type="KEGG" id="vg:3827054"/>
<dbReference type="Proteomes" id="UP000001711">
    <property type="component" value="Genome"/>
</dbReference>
<dbReference type="InterPro" id="IPR025153">
    <property type="entry name" value="Ead_Ea22"/>
</dbReference>
<dbReference type="Pfam" id="PF13935">
    <property type="entry name" value="Ead_Ea22"/>
    <property type="match status" value="1"/>
</dbReference>
<keyword id="KW-0002">3D-structure</keyword>
<keyword id="KW-1185">Reference proteome</keyword>
<accession>P03756</accession>
<feature type="chain" id="PRO_0000077603" description="Protein ea22">
    <location>
        <begin position="1"/>
        <end position="182"/>
    </location>
</feature>
<feature type="strand" evidence="1">
    <location>
        <begin position="112"/>
        <end position="116"/>
    </location>
</feature>
<feature type="strand" evidence="1">
    <location>
        <begin position="123"/>
        <end position="125"/>
    </location>
</feature>
<feature type="helix" evidence="1">
    <location>
        <begin position="131"/>
        <end position="141"/>
    </location>
</feature>
<feature type="strand" evidence="1">
    <location>
        <begin position="146"/>
        <end position="152"/>
    </location>
</feature>
<feature type="turn" evidence="1">
    <location>
        <begin position="156"/>
        <end position="158"/>
    </location>
</feature>
<feature type="strand" evidence="1">
    <location>
        <begin position="159"/>
        <end position="164"/>
    </location>
</feature>
<feature type="helix" evidence="1">
    <location>
        <begin position="165"/>
        <end position="171"/>
    </location>
</feature>
<protein>
    <recommendedName>
        <fullName>Protein ea22</fullName>
    </recommendedName>
</protein>
<gene>
    <name type="primary">ea22</name>
</gene>
<reference key="1">
    <citation type="journal article" date="1982" name="J. Mol. Biol.">
        <title>Nucleotide sequence of bacteriophage lambda DNA.</title>
        <authorList>
            <person name="Sanger F."/>
            <person name="Coulson A.R."/>
            <person name="Hong G.F."/>
            <person name="Hill D.F."/>
            <person name="Petersen G.B."/>
        </authorList>
    </citation>
    <scope>NUCLEOTIDE SEQUENCE [LARGE SCALE GENOMIC DNA]</scope>
</reference>
<sequence>MSEINSQALREAAEQAMHDDWGFDADLFHELVTPSIVLELLDERERNQQYIKRRDQENEDIALTVGKLRVELETAKSKLNEQREYYEGVISDGSKRIAKLESNEVREDGNQFLVVRHPGKTPVIKHCTGDLEEFLRQLIEQDPLVTIDIITHRYYGVGGQWVQDAGEYLHMMSDAGIRIKGE</sequence>
<proteinExistence type="evidence at protein level"/>